<protein>
    <recommendedName>
        <fullName evidence="1">Large ribosomal subunit protein uL15</fullName>
    </recommendedName>
    <alternativeName>
        <fullName evidence="3">50S ribosomal protein L15</fullName>
    </alternativeName>
</protein>
<dbReference type="EMBL" id="CP000485">
    <property type="protein sequence ID" value="ABK83542.1"/>
    <property type="molecule type" value="Genomic_DNA"/>
</dbReference>
<dbReference type="RefSeq" id="WP_000766080.1">
    <property type="nucleotide sequence ID" value="NC_008600.1"/>
</dbReference>
<dbReference type="SMR" id="A0R8J9"/>
<dbReference type="GeneID" id="93010924"/>
<dbReference type="KEGG" id="btl:BALH_0127"/>
<dbReference type="HOGENOM" id="CLU_055188_4_2_9"/>
<dbReference type="GO" id="GO:0022625">
    <property type="term" value="C:cytosolic large ribosomal subunit"/>
    <property type="evidence" value="ECO:0007669"/>
    <property type="project" value="TreeGrafter"/>
</dbReference>
<dbReference type="GO" id="GO:0019843">
    <property type="term" value="F:rRNA binding"/>
    <property type="evidence" value="ECO:0007669"/>
    <property type="project" value="UniProtKB-UniRule"/>
</dbReference>
<dbReference type="GO" id="GO:0003735">
    <property type="term" value="F:structural constituent of ribosome"/>
    <property type="evidence" value="ECO:0007669"/>
    <property type="project" value="InterPro"/>
</dbReference>
<dbReference type="GO" id="GO:0006412">
    <property type="term" value="P:translation"/>
    <property type="evidence" value="ECO:0007669"/>
    <property type="project" value="UniProtKB-UniRule"/>
</dbReference>
<dbReference type="FunFam" id="3.100.10.10:FF:000004">
    <property type="entry name" value="50S ribosomal protein L15"/>
    <property type="match status" value="1"/>
</dbReference>
<dbReference type="Gene3D" id="3.100.10.10">
    <property type="match status" value="1"/>
</dbReference>
<dbReference type="HAMAP" id="MF_01341">
    <property type="entry name" value="Ribosomal_uL15"/>
    <property type="match status" value="1"/>
</dbReference>
<dbReference type="InterPro" id="IPR030878">
    <property type="entry name" value="Ribosomal_uL15"/>
</dbReference>
<dbReference type="InterPro" id="IPR021131">
    <property type="entry name" value="Ribosomal_uL15/eL18"/>
</dbReference>
<dbReference type="InterPro" id="IPR036227">
    <property type="entry name" value="Ribosomal_uL15/eL18_sf"/>
</dbReference>
<dbReference type="InterPro" id="IPR005749">
    <property type="entry name" value="Ribosomal_uL15_bac-type"/>
</dbReference>
<dbReference type="InterPro" id="IPR001196">
    <property type="entry name" value="Ribosomal_uL15_CS"/>
</dbReference>
<dbReference type="NCBIfam" id="TIGR01071">
    <property type="entry name" value="rplO_bact"/>
    <property type="match status" value="1"/>
</dbReference>
<dbReference type="PANTHER" id="PTHR12934">
    <property type="entry name" value="50S RIBOSOMAL PROTEIN L15"/>
    <property type="match status" value="1"/>
</dbReference>
<dbReference type="PANTHER" id="PTHR12934:SF11">
    <property type="entry name" value="LARGE RIBOSOMAL SUBUNIT PROTEIN UL15M"/>
    <property type="match status" value="1"/>
</dbReference>
<dbReference type="Pfam" id="PF00828">
    <property type="entry name" value="Ribosomal_L27A"/>
    <property type="match status" value="1"/>
</dbReference>
<dbReference type="SUPFAM" id="SSF52080">
    <property type="entry name" value="Ribosomal proteins L15p and L18e"/>
    <property type="match status" value="1"/>
</dbReference>
<dbReference type="PROSITE" id="PS00475">
    <property type="entry name" value="RIBOSOMAL_L15"/>
    <property type="match status" value="1"/>
</dbReference>
<comment type="function">
    <text evidence="1">Binds to the 23S rRNA.</text>
</comment>
<comment type="subunit">
    <text evidence="1">Part of the 50S ribosomal subunit.</text>
</comment>
<comment type="similarity">
    <text evidence="1">Belongs to the universal ribosomal protein uL15 family.</text>
</comment>
<sequence length="146" mass="15492">MKLHELKPAEGSRKVRNRVGRGIGSGNGKTAGKGHKGQNARSGGGVRLGFEGGQTPLFRRLPKRGFTNINRKEFAIVNLSTLNRFEDGTEVTPELLLETGVISKLNDGVKILASGAVEKKLTVKAHKFSSSAKEAIEAAGGSVEVI</sequence>
<organism>
    <name type="scientific">Bacillus thuringiensis (strain Al Hakam)</name>
    <dbReference type="NCBI Taxonomy" id="412694"/>
    <lineage>
        <taxon>Bacteria</taxon>
        <taxon>Bacillati</taxon>
        <taxon>Bacillota</taxon>
        <taxon>Bacilli</taxon>
        <taxon>Bacillales</taxon>
        <taxon>Bacillaceae</taxon>
        <taxon>Bacillus</taxon>
        <taxon>Bacillus cereus group</taxon>
    </lineage>
</organism>
<feature type="chain" id="PRO_1000054426" description="Large ribosomal subunit protein uL15">
    <location>
        <begin position="1"/>
        <end position="146"/>
    </location>
</feature>
<feature type="region of interest" description="Disordered" evidence="2">
    <location>
        <begin position="1"/>
        <end position="52"/>
    </location>
</feature>
<feature type="compositionally biased region" description="Basic and acidic residues" evidence="2">
    <location>
        <begin position="1"/>
        <end position="13"/>
    </location>
</feature>
<feature type="compositionally biased region" description="Gly residues" evidence="2">
    <location>
        <begin position="21"/>
        <end position="31"/>
    </location>
</feature>
<feature type="compositionally biased region" description="Gly residues" evidence="2">
    <location>
        <begin position="42"/>
        <end position="52"/>
    </location>
</feature>
<gene>
    <name evidence="1" type="primary">rplO</name>
    <name type="ordered locus">BALH_0127</name>
</gene>
<keyword id="KW-0687">Ribonucleoprotein</keyword>
<keyword id="KW-0689">Ribosomal protein</keyword>
<keyword id="KW-0694">RNA-binding</keyword>
<keyword id="KW-0699">rRNA-binding</keyword>
<name>RL15_BACAH</name>
<reference key="1">
    <citation type="journal article" date="2007" name="J. Bacteriol.">
        <title>The complete genome sequence of Bacillus thuringiensis Al Hakam.</title>
        <authorList>
            <person name="Challacombe J.F."/>
            <person name="Altherr M.R."/>
            <person name="Xie G."/>
            <person name="Bhotika S.S."/>
            <person name="Brown N."/>
            <person name="Bruce D."/>
            <person name="Campbell C.S."/>
            <person name="Campbell M.L."/>
            <person name="Chen J."/>
            <person name="Chertkov O."/>
            <person name="Cleland C."/>
            <person name="Dimitrijevic M."/>
            <person name="Doggett N.A."/>
            <person name="Fawcett J.J."/>
            <person name="Glavina T."/>
            <person name="Goodwin L.A."/>
            <person name="Green L.D."/>
            <person name="Han C.S."/>
            <person name="Hill K.K."/>
            <person name="Hitchcock P."/>
            <person name="Jackson P.J."/>
            <person name="Keim P."/>
            <person name="Kewalramani A.R."/>
            <person name="Longmire J."/>
            <person name="Lucas S."/>
            <person name="Malfatti S."/>
            <person name="Martinez D."/>
            <person name="McMurry K."/>
            <person name="Meincke L.J."/>
            <person name="Misra M."/>
            <person name="Moseman B.L."/>
            <person name="Mundt M."/>
            <person name="Munk A.C."/>
            <person name="Okinaka R.T."/>
            <person name="Parson-Quintana B."/>
            <person name="Reilly L.P."/>
            <person name="Richardson P."/>
            <person name="Robinson D.L."/>
            <person name="Saunders E."/>
            <person name="Tapia R."/>
            <person name="Tesmer J.G."/>
            <person name="Thayer N."/>
            <person name="Thompson L.S."/>
            <person name="Tice H."/>
            <person name="Ticknor L.O."/>
            <person name="Wills P.L."/>
            <person name="Gilna P."/>
            <person name="Brettin T.S."/>
        </authorList>
    </citation>
    <scope>NUCLEOTIDE SEQUENCE [LARGE SCALE GENOMIC DNA]</scope>
    <source>
        <strain>Al Hakam</strain>
    </source>
</reference>
<proteinExistence type="inferred from homology"/>
<accession>A0R8J9</accession>
<evidence type="ECO:0000255" key="1">
    <source>
        <dbReference type="HAMAP-Rule" id="MF_01341"/>
    </source>
</evidence>
<evidence type="ECO:0000256" key="2">
    <source>
        <dbReference type="SAM" id="MobiDB-lite"/>
    </source>
</evidence>
<evidence type="ECO:0000305" key="3"/>